<protein>
    <recommendedName>
        <fullName>BTB/POZ domain-containing protein KCTD5</fullName>
    </recommendedName>
</protein>
<feature type="initiator methionine" description="Removed" evidence="6 8">
    <location>
        <position position="1"/>
    </location>
</feature>
<feature type="chain" id="PRO_0000191291" description="BTB/POZ domain-containing protein KCTD5">
    <location>
        <begin position="2"/>
        <end position="234"/>
    </location>
</feature>
<feature type="domain" description="BTB">
    <location>
        <begin position="44"/>
        <end position="146"/>
    </location>
</feature>
<feature type="region of interest" description="Disordered" evidence="2">
    <location>
        <begin position="213"/>
        <end position="234"/>
    </location>
</feature>
<feature type="compositionally biased region" description="Basic and acidic residues" evidence="2">
    <location>
        <begin position="220"/>
        <end position="234"/>
    </location>
</feature>
<feature type="modified residue" description="N-acetylalanine" evidence="6 8">
    <location>
        <position position="2"/>
    </location>
</feature>
<feature type="modified residue" description="Phosphoserine" evidence="8 9">
    <location>
        <position position="10"/>
    </location>
</feature>
<feature type="sequence conflict" description="In Ref. 1." evidence="7" ref="1">
    <original>G</original>
    <variation>R</variation>
    <location>
        <position position="178"/>
    </location>
</feature>
<feature type="strand" evidence="12">
    <location>
        <begin position="45"/>
        <end position="50"/>
    </location>
</feature>
<feature type="strand" evidence="12">
    <location>
        <begin position="53"/>
        <end position="58"/>
    </location>
</feature>
<feature type="helix" evidence="12">
    <location>
        <begin position="59"/>
        <end position="62"/>
    </location>
</feature>
<feature type="helix" evidence="12">
    <location>
        <begin position="69"/>
        <end position="74"/>
    </location>
</feature>
<feature type="helix" evidence="12">
    <location>
        <begin position="78"/>
        <end position="83"/>
    </location>
</feature>
<feature type="strand" evidence="12">
    <location>
        <begin position="90"/>
        <end position="92"/>
    </location>
</feature>
<feature type="helix" evidence="12">
    <location>
        <begin position="96"/>
        <end position="108"/>
    </location>
</feature>
<feature type="strand" evidence="11">
    <location>
        <begin position="115"/>
        <end position="117"/>
    </location>
</feature>
<feature type="helix" evidence="12">
    <location>
        <begin position="119"/>
        <end position="129"/>
    </location>
</feature>
<feature type="helix" evidence="12">
    <location>
        <begin position="132"/>
        <end position="144"/>
    </location>
</feature>
<feature type="turn" evidence="11">
    <location>
        <begin position="146"/>
        <end position="148"/>
    </location>
</feature>
<feature type="strand" evidence="10">
    <location>
        <begin position="157"/>
        <end position="163"/>
    </location>
</feature>
<feature type="helix" evidence="10">
    <location>
        <begin position="167"/>
        <end position="173"/>
    </location>
</feature>
<feature type="strand" evidence="10">
    <location>
        <begin position="180"/>
        <end position="186"/>
    </location>
</feature>
<feature type="turn" evidence="10">
    <location>
        <begin position="190"/>
        <end position="194"/>
    </location>
</feature>
<feature type="strand" evidence="10">
    <location>
        <begin position="201"/>
        <end position="207"/>
    </location>
</feature>
<comment type="function">
    <text evidence="4 5">Its interaction with CUL3 suggests that it may act as a substrate adapter in some E3 ligase complex (PubMed:18573101). Does not affect the function of Kv channel Kv2.1/KCNB1, Kv1.2/KCNA2, Kv4.2/KCND2 and Kv3.4/KCNC4 (PubMed:19361449).</text>
</comment>
<comment type="subunit">
    <text evidence="1 4 5">Homopentamer (PubMed:19361449). Interacts (via C-terminus) with GRASP55/GORASP2 (PubMed:19361449). Interacts with CUL3 and with ubiquitinated proteins (PubMed:18573101). Interacts with CRY1 (By similarity).</text>
</comment>
<comment type="subunit">
    <text evidence="3">(Microbial infection) Interacts with adeno-associated virus 2 (AAV-2) REP proteins.</text>
</comment>
<comment type="interaction">
    <interactant intactId="EBI-1056857">
        <id>Q9NXV2</id>
    </interactant>
    <interactant intactId="EBI-1056857">
        <id>Q9NXV2</id>
        <label>KCTD5</label>
    </interactant>
    <organismsDiffer>false</organismsDiffer>
    <experiments>2</experiments>
</comment>
<comment type="interaction">
    <interactant intactId="EBI-1056857">
        <id>Q9NXV2</id>
    </interactant>
    <interactant intactId="EBI-7387242">
        <id>P03132</id>
        <label>Rep68</label>
    </interactant>
    <organismsDiffer>true</organismsDiffer>
    <experiments>3</experiments>
</comment>
<comment type="subcellular location">
    <subcellularLocation>
        <location evidence="3">Cytoplasm</location>
        <location evidence="3">Cytosol</location>
    </subcellularLocation>
    <subcellularLocation>
        <location evidence="4">Cytoplasm</location>
    </subcellularLocation>
    <subcellularLocation>
        <location>Nucleus</location>
    </subcellularLocation>
    <text evidence="4">Predominantly cytoplasmic, translocated to the nucleus upon interaction with Rep proteins.</text>
</comment>
<comment type="induction">
    <text evidence="4">Up-regulated in peripheral blood lymphocytes stimulated through the T-cell receptor.</text>
</comment>
<comment type="domain">
    <text evidence="5">The BTB (POZ) domain is atypical and mediates the formation of a homopentamer instead of a homotetramer (PubMed:19361449). Homopentamerization is due to the presence of 4 residues in the BTB (POZ) domain: Leu-56, Gly-100, Val-112 and Ala-118.</text>
</comment>
<evidence type="ECO:0000250" key="1">
    <source>
        <dbReference type="UniProtKB" id="Q8VC57"/>
    </source>
</evidence>
<evidence type="ECO:0000256" key="2">
    <source>
        <dbReference type="SAM" id="MobiDB-lite"/>
    </source>
</evidence>
<evidence type="ECO:0000269" key="3">
    <source>
    </source>
</evidence>
<evidence type="ECO:0000269" key="4">
    <source>
    </source>
</evidence>
<evidence type="ECO:0000269" key="5">
    <source>
    </source>
</evidence>
<evidence type="ECO:0000269" key="6">
    <source ref="5"/>
</evidence>
<evidence type="ECO:0000305" key="7"/>
<evidence type="ECO:0007744" key="8">
    <source>
    </source>
</evidence>
<evidence type="ECO:0007744" key="9">
    <source>
    </source>
</evidence>
<evidence type="ECO:0007829" key="10">
    <source>
        <dbReference type="PDB" id="3DRX"/>
    </source>
</evidence>
<evidence type="ECO:0007829" key="11">
    <source>
        <dbReference type="PDB" id="3DRY"/>
    </source>
</evidence>
<evidence type="ECO:0007829" key="12">
    <source>
        <dbReference type="PDB" id="3DRZ"/>
    </source>
</evidence>
<organism>
    <name type="scientific">Homo sapiens</name>
    <name type="common">Human</name>
    <dbReference type="NCBI Taxonomy" id="9606"/>
    <lineage>
        <taxon>Eukaryota</taxon>
        <taxon>Metazoa</taxon>
        <taxon>Chordata</taxon>
        <taxon>Craniata</taxon>
        <taxon>Vertebrata</taxon>
        <taxon>Euteleostomi</taxon>
        <taxon>Mammalia</taxon>
        <taxon>Eutheria</taxon>
        <taxon>Euarchontoglires</taxon>
        <taxon>Primates</taxon>
        <taxon>Haplorrhini</taxon>
        <taxon>Catarrhini</taxon>
        <taxon>Hominidae</taxon>
        <taxon>Homo</taxon>
    </lineage>
</organism>
<proteinExistence type="evidence at protein level"/>
<accession>Q9NXV2</accession>
<accession>D3DU96</accession>
<reference key="1">
    <citation type="journal article" date="2007" name="Virology">
        <title>Identification of a cytoplasmic interaction partner of the large regulatory proteins Rep78/Rep68 of adeno-associated virus type 2 (AAV-2).</title>
        <authorList>
            <person name="Weger S."/>
            <person name="Hammer E."/>
            <person name="Goetz A."/>
            <person name="Heilbronn R."/>
        </authorList>
    </citation>
    <scope>NUCLEOTIDE SEQUENCE [MRNA]</scope>
    <scope>SUBCELLULAR LOCATION</scope>
    <scope>INTERACTION WITH AAV-S REP (MICROBIAL INFECTION)</scope>
</reference>
<reference key="2">
    <citation type="journal article" date="2004" name="Nat. Genet.">
        <title>Complete sequencing and characterization of 21,243 full-length human cDNAs.</title>
        <authorList>
            <person name="Ota T."/>
            <person name="Suzuki Y."/>
            <person name="Nishikawa T."/>
            <person name="Otsuki T."/>
            <person name="Sugiyama T."/>
            <person name="Irie R."/>
            <person name="Wakamatsu A."/>
            <person name="Hayashi K."/>
            <person name="Sato H."/>
            <person name="Nagai K."/>
            <person name="Kimura K."/>
            <person name="Makita H."/>
            <person name="Sekine M."/>
            <person name="Obayashi M."/>
            <person name="Nishi T."/>
            <person name="Shibahara T."/>
            <person name="Tanaka T."/>
            <person name="Ishii S."/>
            <person name="Yamamoto J."/>
            <person name="Saito K."/>
            <person name="Kawai Y."/>
            <person name="Isono Y."/>
            <person name="Nakamura Y."/>
            <person name="Nagahari K."/>
            <person name="Murakami K."/>
            <person name="Yasuda T."/>
            <person name="Iwayanagi T."/>
            <person name="Wagatsuma M."/>
            <person name="Shiratori A."/>
            <person name="Sudo H."/>
            <person name="Hosoiri T."/>
            <person name="Kaku Y."/>
            <person name="Kodaira H."/>
            <person name="Kondo H."/>
            <person name="Sugawara M."/>
            <person name="Takahashi M."/>
            <person name="Kanda K."/>
            <person name="Yokoi T."/>
            <person name="Furuya T."/>
            <person name="Kikkawa E."/>
            <person name="Omura Y."/>
            <person name="Abe K."/>
            <person name="Kamihara K."/>
            <person name="Katsuta N."/>
            <person name="Sato K."/>
            <person name="Tanikawa M."/>
            <person name="Yamazaki M."/>
            <person name="Ninomiya K."/>
            <person name="Ishibashi T."/>
            <person name="Yamashita H."/>
            <person name="Murakawa K."/>
            <person name="Fujimori K."/>
            <person name="Tanai H."/>
            <person name="Kimata M."/>
            <person name="Watanabe M."/>
            <person name="Hiraoka S."/>
            <person name="Chiba Y."/>
            <person name="Ishida S."/>
            <person name="Ono Y."/>
            <person name="Takiguchi S."/>
            <person name="Watanabe S."/>
            <person name="Yosida M."/>
            <person name="Hotuta T."/>
            <person name="Kusano J."/>
            <person name="Kanehori K."/>
            <person name="Takahashi-Fujii A."/>
            <person name="Hara H."/>
            <person name="Tanase T.-O."/>
            <person name="Nomura Y."/>
            <person name="Togiya S."/>
            <person name="Komai F."/>
            <person name="Hara R."/>
            <person name="Takeuchi K."/>
            <person name="Arita M."/>
            <person name="Imose N."/>
            <person name="Musashino K."/>
            <person name="Yuuki H."/>
            <person name="Oshima A."/>
            <person name="Sasaki N."/>
            <person name="Aotsuka S."/>
            <person name="Yoshikawa Y."/>
            <person name="Matsunawa H."/>
            <person name="Ichihara T."/>
            <person name="Shiohata N."/>
            <person name="Sano S."/>
            <person name="Moriya S."/>
            <person name="Momiyama H."/>
            <person name="Satoh N."/>
            <person name="Takami S."/>
            <person name="Terashima Y."/>
            <person name="Suzuki O."/>
            <person name="Nakagawa S."/>
            <person name="Senoh A."/>
            <person name="Mizoguchi H."/>
            <person name="Goto Y."/>
            <person name="Shimizu F."/>
            <person name="Wakebe H."/>
            <person name="Hishigaki H."/>
            <person name="Watanabe T."/>
            <person name="Sugiyama A."/>
            <person name="Takemoto M."/>
            <person name="Kawakami B."/>
            <person name="Yamazaki M."/>
            <person name="Watanabe K."/>
            <person name="Kumagai A."/>
            <person name="Itakura S."/>
            <person name="Fukuzumi Y."/>
            <person name="Fujimori Y."/>
            <person name="Komiyama M."/>
            <person name="Tashiro H."/>
            <person name="Tanigami A."/>
            <person name="Fujiwara T."/>
            <person name="Ono T."/>
            <person name="Yamada K."/>
            <person name="Fujii Y."/>
            <person name="Ozaki K."/>
            <person name="Hirao M."/>
            <person name="Ohmori Y."/>
            <person name="Kawabata A."/>
            <person name="Hikiji T."/>
            <person name="Kobatake N."/>
            <person name="Inagaki H."/>
            <person name="Ikema Y."/>
            <person name="Okamoto S."/>
            <person name="Okitani R."/>
            <person name="Kawakami T."/>
            <person name="Noguchi S."/>
            <person name="Itoh T."/>
            <person name="Shigeta K."/>
            <person name="Senba T."/>
            <person name="Matsumura K."/>
            <person name="Nakajima Y."/>
            <person name="Mizuno T."/>
            <person name="Morinaga M."/>
            <person name="Sasaki M."/>
            <person name="Togashi T."/>
            <person name="Oyama M."/>
            <person name="Hata H."/>
            <person name="Watanabe M."/>
            <person name="Komatsu T."/>
            <person name="Mizushima-Sugano J."/>
            <person name="Satoh T."/>
            <person name="Shirai Y."/>
            <person name="Takahashi Y."/>
            <person name="Nakagawa K."/>
            <person name="Okumura K."/>
            <person name="Nagase T."/>
            <person name="Nomura N."/>
            <person name="Kikuchi H."/>
            <person name="Masuho Y."/>
            <person name="Yamashita R."/>
            <person name="Nakai K."/>
            <person name="Yada T."/>
            <person name="Nakamura Y."/>
            <person name="Ohara O."/>
            <person name="Isogai T."/>
            <person name="Sugano S."/>
        </authorList>
    </citation>
    <scope>NUCLEOTIDE SEQUENCE [LARGE SCALE MRNA]</scope>
    <source>
        <tissue>Colon</tissue>
    </source>
</reference>
<reference key="3">
    <citation type="submission" date="2005-09" db="EMBL/GenBank/DDBJ databases">
        <authorList>
            <person name="Mural R.J."/>
            <person name="Istrail S."/>
            <person name="Sutton G.G."/>
            <person name="Florea L."/>
            <person name="Halpern A.L."/>
            <person name="Mobarry C.M."/>
            <person name="Lippert R."/>
            <person name="Walenz B."/>
            <person name="Shatkay H."/>
            <person name="Dew I."/>
            <person name="Miller J.R."/>
            <person name="Flanigan M.J."/>
            <person name="Edwards N.J."/>
            <person name="Bolanos R."/>
            <person name="Fasulo D."/>
            <person name="Halldorsson B.V."/>
            <person name="Hannenhalli S."/>
            <person name="Turner R."/>
            <person name="Yooseph S."/>
            <person name="Lu F."/>
            <person name="Nusskern D.R."/>
            <person name="Shue B.C."/>
            <person name="Zheng X.H."/>
            <person name="Zhong F."/>
            <person name="Delcher A.L."/>
            <person name="Huson D.H."/>
            <person name="Kravitz S.A."/>
            <person name="Mouchard L."/>
            <person name="Reinert K."/>
            <person name="Remington K.A."/>
            <person name="Clark A.G."/>
            <person name="Waterman M.S."/>
            <person name="Eichler E.E."/>
            <person name="Adams M.D."/>
            <person name="Hunkapiller M.W."/>
            <person name="Myers E.W."/>
            <person name="Venter J.C."/>
        </authorList>
    </citation>
    <scope>NUCLEOTIDE SEQUENCE [LARGE SCALE GENOMIC DNA]</scope>
</reference>
<reference key="4">
    <citation type="journal article" date="2004" name="Genome Res.">
        <title>The status, quality, and expansion of the NIH full-length cDNA project: the Mammalian Gene Collection (MGC).</title>
        <authorList>
            <consortium name="The MGC Project Team"/>
        </authorList>
    </citation>
    <scope>NUCLEOTIDE SEQUENCE [LARGE SCALE MRNA]</scope>
    <source>
        <tissue>Lymph</tissue>
    </source>
</reference>
<reference key="5">
    <citation type="submission" date="2008-10" db="UniProtKB">
        <authorList>
            <person name="Bienvenut W.V."/>
            <person name="Heiserich L."/>
            <person name="Gottlieb E."/>
        </authorList>
    </citation>
    <scope>PROTEIN SEQUENCE OF 2-13 AND 48-59</scope>
    <scope>CLEAVAGE OF INITIATOR METHIONINE</scope>
    <scope>ACETYLATION AT ALA-2</scope>
    <scope>IDENTIFICATION BY MASS SPECTROMETRY</scope>
    <source>
        <tissue>Colon carcinoma</tissue>
    </source>
</reference>
<reference key="6">
    <citation type="journal article" date="2008" name="FEBS J.">
        <title>KCTD5, a putative substrate adaptor for cullin3 ubiquitin ligases.</title>
        <authorList>
            <person name="Bayon Y."/>
            <person name="Trinidad A.G."/>
            <person name="de la Puerta M.L."/>
            <person name="Del Carmen Rodriguez M."/>
            <person name="Bogetz J."/>
            <person name="Rojas A."/>
            <person name="De Pereda J.M."/>
            <person name="Rahmouni S."/>
            <person name="Williams S."/>
            <person name="Matsuzawa S."/>
            <person name="Reed J.C."/>
            <person name="Crespo M.S."/>
            <person name="Mustelin T."/>
            <person name="Alonso A."/>
        </authorList>
    </citation>
    <scope>POSSIBLE FUNCTION</scope>
    <scope>SUBCELLULAR LOCATION</scope>
    <scope>INTERACTION WITH CUL3</scope>
    <scope>INDUCTION</scope>
</reference>
<reference key="7">
    <citation type="journal article" date="2010" name="Sci. Signal.">
        <title>Quantitative phosphoproteomics reveals widespread full phosphorylation site occupancy during mitosis.</title>
        <authorList>
            <person name="Olsen J.V."/>
            <person name="Vermeulen M."/>
            <person name="Santamaria A."/>
            <person name="Kumar C."/>
            <person name="Miller M.L."/>
            <person name="Jensen L.J."/>
            <person name="Gnad F."/>
            <person name="Cox J."/>
            <person name="Jensen T.S."/>
            <person name="Nigg E.A."/>
            <person name="Brunak S."/>
            <person name="Mann M."/>
        </authorList>
    </citation>
    <scope>ACETYLATION [LARGE SCALE ANALYSIS] AT ALA-2</scope>
    <scope>PHOSPHORYLATION [LARGE SCALE ANALYSIS] AT SER-10</scope>
    <scope>CLEAVAGE OF INITIATOR METHIONINE [LARGE SCALE ANALYSIS]</scope>
    <scope>IDENTIFICATION BY MASS SPECTROMETRY [LARGE SCALE ANALYSIS]</scope>
    <source>
        <tissue>Cervix carcinoma</tissue>
    </source>
</reference>
<reference key="8">
    <citation type="journal article" date="2011" name="BMC Syst. Biol.">
        <title>Initial characterization of the human central proteome.</title>
        <authorList>
            <person name="Burkard T.R."/>
            <person name="Planyavsky M."/>
            <person name="Kaupe I."/>
            <person name="Breitwieser F.P."/>
            <person name="Buerckstuemmer T."/>
            <person name="Bennett K.L."/>
            <person name="Superti-Furga G."/>
            <person name="Colinge J."/>
        </authorList>
    </citation>
    <scope>IDENTIFICATION BY MASS SPECTROMETRY [LARGE SCALE ANALYSIS]</scope>
</reference>
<reference key="9">
    <citation type="journal article" date="2013" name="J. Proteome Res.">
        <title>Toward a comprehensive characterization of a human cancer cell phosphoproteome.</title>
        <authorList>
            <person name="Zhou H."/>
            <person name="Di Palma S."/>
            <person name="Preisinger C."/>
            <person name="Peng M."/>
            <person name="Polat A.N."/>
            <person name="Heck A.J."/>
            <person name="Mohammed S."/>
        </authorList>
    </citation>
    <scope>PHOSPHORYLATION [LARGE SCALE ANALYSIS] AT SER-10</scope>
    <scope>IDENTIFICATION BY MASS SPECTROMETRY [LARGE SCALE ANALYSIS]</scope>
    <source>
        <tissue>Cervix carcinoma</tissue>
        <tissue>Erythroleukemia</tissue>
    </source>
</reference>
<reference key="10">
    <citation type="journal article" date="2009" name="J. Mol. Biol.">
        <title>Pentameric assembly of potassium channel tetramerization domain-containing protein 5.</title>
        <authorList>
            <person name="Dementieva I.S."/>
            <person name="Tereshko V."/>
            <person name="McCrossan Z.A."/>
            <person name="Solomaha E."/>
            <person name="Araki D."/>
            <person name="Xu C."/>
            <person name="Grigorieff N."/>
            <person name="Goldstein S.A."/>
        </authorList>
    </citation>
    <scope>X-RAY CRYSTALLOGRAPHY (1.90 ANGSTROMS) OF 34-234</scope>
    <scope>SUBUNIT</scope>
    <scope>DOMAIN BTB</scope>
    <scope>INTERACTION WITH GORASP2</scope>
    <scope>FUNCTION</scope>
</reference>
<gene>
    <name type="primary">KCTD5</name>
</gene>
<name>KCTD5_HUMAN</name>
<dbReference type="EMBL" id="AK000047">
    <property type="protein sequence ID" value="BAA90906.1"/>
    <property type="molecule type" value="mRNA"/>
</dbReference>
<dbReference type="EMBL" id="CH471112">
    <property type="protein sequence ID" value="EAW85489.1"/>
    <property type="molecule type" value="Genomic_DNA"/>
</dbReference>
<dbReference type="EMBL" id="CH471112">
    <property type="protein sequence ID" value="EAW85491.1"/>
    <property type="molecule type" value="Genomic_DNA"/>
</dbReference>
<dbReference type="EMBL" id="BC007314">
    <property type="protein sequence ID" value="AAH07314.1"/>
    <property type="molecule type" value="mRNA"/>
</dbReference>
<dbReference type="CCDS" id="CCDS10475.1"/>
<dbReference type="RefSeq" id="NP_061865.1">
    <property type="nucleotide sequence ID" value="NM_018992.4"/>
</dbReference>
<dbReference type="PDB" id="3DRX">
    <property type="method" value="X-ray"/>
    <property type="resolution" value="3.11 A"/>
    <property type="chains" value="A/B/C/D/E=34-234"/>
</dbReference>
<dbReference type="PDB" id="3DRY">
    <property type="method" value="X-ray"/>
    <property type="resolution" value="3.30 A"/>
    <property type="chains" value="A/B/C/D/E=34-234"/>
</dbReference>
<dbReference type="PDB" id="3DRZ">
    <property type="method" value="X-ray"/>
    <property type="resolution" value="1.90 A"/>
    <property type="chains" value="A/B/C/D/E=40-145"/>
</dbReference>
<dbReference type="PDB" id="8U7Z">
    <property type="method" value="EM"/>
    <property type="resolution" value="2.97 A"/>
    <property type="chains" value="K1/K2/K3/K4/K5=1-234"/>
</dbReference>
<dbReference type="PDB" id="8U80">
    <property type="method" value="EM"/>
    <property type="resolution" value="3.60 A"/>
    <property type="chains" value="K1/K2/K3/K4/K5=1-234"/>
</dbReference>
<dbReference type="PDB" id="8U81">
    <property type="method" value="EM"/>
    <property type="resolution" value="3.82 A"/>
    <property type="chains" value="K1/K2/K3/K4/K5=1-233"/>
</dbReference>
<dbReference type="PDB" id="8U82">
    <property type="method" value="EM"/>
    <property type="resolution" value="3.84 A"/>
    <property type="chains" value="K1/K2/K3/K4/K5=1-234"/>
</dbReference>
<dbReference type="PDB" id="8U83">
    <property type="method" value="EM"/>
    <property type="resolution" value="3.98 A"/>
    <property type="chains" value="K1/K2/K3/K4/K5=1-234"/>
</dbReference>
<dbReference type="PDB" id="8U84">
    <property type="method" value="EM"/>
    <property type="resolution" value="3.88 A"/>
    <property type="chains" value="K1/K2/K3/K4/K5=1-234"/>
</dbReference>
<dbReference type="PDBsum" id="3DRX"/>
<dbReference type="PDBsum" id="3DRY"/>
<dbReference type="PDBsum" id="3DRZ"/>
<dbReference type="PDBsum" id="8U7Z"/>
<dbReference type="PDBsum" id="8U80"/>
<dbReference type="PDBsum" id="8U81"/>
<dbReference type="PDBsum" id="8U82"/>
<dbReference type="PDBsum" id="8U83"/>
<dbReference type="PDBsum" id="8U84"/>
<dbReference type="EMDB" id="EMD-41996"/>
<dbReference type="EMDB" id="EMD-42000"/>
<dbReference type="EMDB" id="EMD-42001"/>
<dbReference type="EMDB" id="EMD-42004"/>
<dbReference type="EMDB" id="EMD-42008"/>
<dbReference type="SMR" id="Q9NXV2"/>
<dbReference type="BioGRID" id="119958">
    <property type="interactions" value="142"/>
</dbReference>
<dbReference type="FunCoup" id="Q9NXV2">
    <property type="interactions" value="1231"/>
</dbReference>
<dbReference type="IntAct" id="Q9NXV2">
    <property type="interactions" value="44"/>
</dbReference>
<dbReference type="MINT" id="Q9NXV2"/>
<dbReference type="STRING" id="9606.ENSP00000301738"/>
<dbReference type="GlyGen" id="Q9NXV2">
    <property type="glycosylation" value="1 site, 1 O-linked glycan (1 site)"/>
</dbReference>
<dbReference type="iPTMnet" id="Q9NXV2"/>
<dbReference type="PhosphoSitePlus" id="Q9NXV2"/>
<dbReference type="BioMuta" id="KCTD5"/>
<dbReference type="DMDM" id="50401182"/>
<dbReference type="jPOST" id="Q9NXV2"/>
<dbReference type="MassIVE" id="Q9NXV2"/>
<dbReference type="PaxDb" id="9606-ENSP00000301738"/>
<dbReference type="PeptideAtlas" id="Q9NXV2"/>
<dbReference type="ProteomicsDB" id="83137"/>
<dbReference type="Pumba" id="Q9NXV2"/>
<dbReference type="Antibodypedia" id="42594">
    <property type="antibodies" value="95 antibodies from 20 providers"/>
</dbReference>
<dbReference type="DNASU" id="54442"/>
<dbReference type="Ensembl" id="ENST00000301738.9">
    <property type="protein sequence ID" value="ENSP00000301738.4"/>
    <property type="gene ID" value="ENSG00000167977.9"/>
</dbReference>
<dbReference type="GeneID" id="54442"/>
<dbReference type="KEGG" id="hsa:54442"/>
<dbReference type="MANE-Select" id="ENST00000301738.9">
    <property type="protein sequence ID" value="ENSP00000301738.4"/>
    <property type="RefSeq nucleotide sequence ID" value="NM_018992.4"/>
    <property type="RefSeq protein sequence ID" value="NP_061865.1"/>
</dbReference>
<dbReference type="UCSC" id="uc002crd.5">
    <property type="organism name" value="human"/>
</dbReference>
<dbReference type="AGR" id="HGNC:21423"/>
<dbReference type="CTD" id="54442"/>
<dbReference type="DisGeNET" id="54442"/>
<dbReference type="GeneCards" id="KCTD5"/>
<dbReference type="HGNC" id="HGNC:21423">
    <property type="gene designation" value="KCTD5"/>
</dbReference>
<dbReference type="HPA" id="ENSG00000167977">
    <property type="expression patterns" value="Low tissue specificity"/>
</dbReference>
<dbReference type="MIM" id="611285">
    <property type="type" value="gene"/>
</dbReference>
<dbReference type="neXtProt" id="NX_Q9NXV2"/>
<dbReference type="OpenTargets" id="ENSG00000167977"/>
<dbReference type="PharmGKB" id="PA134923177"/>
<dbReference type="VEuPathDB" id="HostDB:ENSG00000167977"/>
<dbReference type="eggNOG" id="KOG2715">
    <property type="taxonomic scope" value="Eukaryota"/>
</dbReference>
<dbReference type="GeneTree" id="ENSGT00940000160374"/>
<dbReference type="HOGENOM" id="CLU_070830_1_0_1"/>
<dbReference type="InParanoid" id="Q9NXV2"/>
<dbReference type="OMA" id="LPGKWVR"/>
<dbReference type="OrthoDB" id="1244179at2759"/>
<dbReference type="PAN-GO" id="Q9NXV2">
    <property type="GO annotations" value="4 GO annotations based on evolutionary models"/>
</dbReference>
<dbReference type="PhylomeDB" id="Q9NXV2"/>
<dbReference type="TreeFam" id="TF313754"/>
<dbReference type="PathwayCommons" id="Q9NXV2"/>
<dbReference type="SignaLink" id="Q9NXV2"/>
<dbReference type="BioGRID-ORCS" id="54442">
    <property type="hits" value="66 hits in 1191 CRISPR screens"/>
</dbReference>
<dbReference type="ChiTaRS" id="KCTD5">
    <property type="organism name" value="human"/>
</dbReference>
<dbReference type="EvolutionaryTrace" id="Q9NXV2"/>
<dbReference type="GenomeRNAi" id="54442"/>
<dbReference type="Pharos" id="Q9NXV2">
    <property type="development level" value="Tbio"/>
</dbReference>
<dbReference type="PRO" id="PR:Q9NXV2"/>
<dbReference type="Proteomes" id="UP000005640">
    <property type="component" value="Chromosome 16"/>
</dbReference>
<dbReference type="RNAct" id="Q9NXV2">
    <property type="molecule type" value="protein"/>
</dbReference>
<dbReference type="Bgee" id="ENSG00000167977">
    <property type="expression patterns" value="Expressed in secondary oocyte and 181 other cell types or tissues"/>
</dbReference>
<dbReference type="ExpressionAtlas" id="Q9NXV2">
    <property type="expression patterns" value="baseline and differential"/>
</dbReference>
<dbReference type="GO" id="GO:0031463">
    <property type="term" value="C:Cul3-RING ubiquitin ligase complex"/>
    <property type="evidence" value="ECO:0000318"/>
    <property type="project" value="GO_Central"/>
</dbReference>
<dbReference type="GO" id="GO:0005737">
    <property type="term" value="C:cytoplasm"/>
    <property type="evidence" value="ECO:0000318"/>
    <property type="project" value="GO_Central"/>
</dbReference>
<dbReference type="GO" id="GO:0005829">
    <property type="term" value="C:cytosol"/>
    <property type="evidence" value="ECO:0000314"/>
    <property type="project" value="UniProtKB"/>
</dbReference>
<dbReference type="GO" id="GO:0005634">
    <property type="term" value="C:nucleus"/>
    <property type="evidence" value="ECO:0007669"/>
    <property type="project" value="UniProtKB-SubCell"/>
</dbReference>
<dbReference type="GO" id="GO:0097602">
    <property type="term" value="F:cullin family protein binding"/>
    <property type="evidence" value="ECO:0000318"/>
    <property type="project" value="GO_Central"/>
</dbReference>
<dbReference type="GO" id="GO:0042802">
    <property type="term" value="F:identical protein binding"/>
    <property type="evidence" value="ECO:0000353"/>
    <property type="project" value="IntAct"/>
</dbReference>
<dbReference type="GO" id="GO:0044877">
    <property type="term" value="F:protein-containing complex binding"/>
    <property type="evidence" value="ECO:0000314"/>
    <property type="project" value="MGI"/>
</dbReference>
<dbReference type="GO" id="GO:0043161">
    <property type="term" value="P:proteasome-mediated ubiquitin-dependent protein catabolic process"/>
    <property type="evidence" value="ECO:0000318"/>
    <property type="project" value="GO_Central"/>
</dbReference>
<dbReference type="GO" id="GO:0051260">
    <property type="term" value="P:protein homooligomerization"/>
    <property type="evidence" value="ECO:0007669"/>
    <property type="project" value="InterPro"/>
</dbReference>
<dbReference type="CDD" id="cd18390">
    <property type="entry name" value="BTB_POZ_KCTD5"/>
    <property type="match status" value="1"/>
</dbReference>
<dbReference type="DisProt" id="DP02706"/>
<dbReference type="FunFam" id="3.30.70.2000:FF:000001">
    <property type="entry name" value="Potassium channel tetramerization domain-containing 17"/>
    <property type="match status" value="1"/>
</dbReference>
<dbReference type="FunFam" id="3.30.710.10:FF:000005">
    <property type="entry name" value="Potassium channel tetramerization domain-containing 17"/>
    <property type="match status" value="1"/>
</dbReference>
<dbReference type="Gene3D" id="3.30.70.2000">
    <property type="match status" value="1"/>
</dbReference>
<dbReference type="Gene3D" id="6.10.140.750">
    <property type="match status" value="1"/>
</dbReference>
<dbReference type="Gene3D" id="3.30.710.10">
    <property type="entry name" value="Potassium Channel Kv1.1, Chain A"/>
    <property type="match status" value="1"/>
</dbReference>
<dbReference type="InterPro" id="IPR000210">
    <property type="entry name" value="BTB/POZ_dom"/>
</dbReference>
<dbReference type="InterPro" id="IPR011333">
    <property type="entry name" value="SKP1/BTB/POZ_sf"/>
</dbReference>
<dbReference type="InterPro" id="IPR003131">
    <property type="entry name" value="T1-type_BTB"/>
</dbReference>
<dbReference type="PANTHER" id="PTHR14958:SF12">
    <property type="entry name" value="BTB_POZ DOMAIN-CONTAINING PROTEIN KCTD5"/>
    <property type="match status" value="1"/>
</dbReference>
<dbReference type="PANTHER" id="PTHR14958">
    <property type="entry name" value="POTASSIUM CHANNEL TETRAMERISATION DOMAIN CONTAINING PROTEIN"/>
    <property type="match status" value="1"/>
</dbReference>
<dbReference type="Pfam" id="PF02214">
    <property type="entry name" value="BTB_2"/>
    <property type="match status" value="1"/>
</dbReference>
<dbReference type="SMART" id="SM00225">
    <property type="entry name" value="BTB"/>
    <property type="match status" value="1"/>
</dbReference>
<dbReference type="SUPFAM" id="SSF54695">
    <property type="entry name" value="POZ domain"/>
    <property type="match status" value="1"/>
</dbReference>
<keyword id="KW-0002">3D-structure</keyword>
<keyword id="KW-0007">Acetylation</keyword>
<keyword id="KW-0963">Cytoplasm</keyword>
<keyword id="KW-0903">Direct protein sequencing</keyword>
<keyword id="KW-0945">Host-virus interaction</keyword>
<keyword id="KW-0539">Nucleus</keyword>
<keyword id="KW-0597">Phosphoprotein</keyword>
<keyword id="KW-1267">Proteomics identification</keyword>
<keyword id="KW-1185">Reference proteome</keyword>
<sequence>MAENHCELLSPARGGIGAGLGGGLCRRCSAGLGALAQRPGSVSKWVRLNVGGTYFLTTRQTLCRDPKSFLYRLCQADPDLDSDKDETGAYLIDRDPTYFGPVLNYLRHGKLVINKDLAEEGVLEEAEFYNITSLIKLVKDKIRERDSKTSQVPVKHVYRVLQCQEEELTQMVSTMSDGWKFEQLVSIGSSYNYGNEDQAEFLCVVSKELHNTPYGTASEPSEKAKILQERGSRM</sequence>